<keyword id="KW-0025">Alternative splicing</keyword>
<keyword id="KW-0963">Cytoplasm</keyword>
<keyword id="KW-0269">Exonuclease</keyword>
<keyword id="KW-0378">Hydrolase</keyword>
<keyword id="KW-0479">Metal-binding</keyword>
<keyword id="KW-0507">mRNA processing</keyword>
<keyword id="KW-0540">Nuclease</keyword>
<keyword id="KW-0539">Nucleus</keyword>
<keyword id="KW-0611">Plant defense</keyword>
<keyword id="KW-1185">Reference proteome</keyword>
<keyword id="KW-0694">RNA-binding</keyword>
<protein>
    <recommendedName>
        <fullName>Poly(A)-specific ribonuclease PARN</fullName>
        <ecNumber>3.1.13.4</ecNumber>
    </recommendedName>
    <alternativeName>
        <fullName>Polyadenylate-specific ribonuclease</fullName>
        <shortName>AtPARN</shortName>
    </alternativeName>
    <alternativeName>
        <fullName>Protein ABA hypersensitive germination 2</fullName>
    </alternativeName>
</protein>
<proteinExistence type="evidence at protein level"/>
<reference key="1">
    <citation type="journal article" date="2005" name="Plant J.">
        <title>Analysis of ABA hypersensitive germination2 revealed the pivotal functions of PARN in stress response in Arabidopsis.</title>
        <authorList>
            <person name="Nishimura N."/>
            <person name="Kitahata N."/>
            <person name="Seki M."/>
            <person name="Narusaka Y."/>
            <person name="Narusaka M."/>
            <person name="Kuromori T."/>
            <person name="Asami T."/>
            <person name="Shinozaki K."/>
            <person name="Hirayama T."/>
        </authorList>
    </citation>
    <scope>NUCLEOTIDE SEQUENCE [MRNA] (ISOFORMS 1; 2 AND 3)</scope>
    <scope>FUNCTION</scope>
    <source>
        <strain>cv. Columbia</strain>
    </source>
</reference>
<reference key="2">
    <citation type="journal article" date="2000" name="Nature">
        <title>Sequence and analysis of chromosome 1 of the plant Arabidopsis thaliana.</title>
        <authorList>
            <person name="Theologis A."/>
            <person name="Ecker J.R."/>
            <person name="Palm C.J."/>
            <person name="Federspiel N.A."/>
            <person name="Kaul S."/>
            <person name="White O."/>
            <person name="Alonso J."/>
            <person name="Altafi H."/>
            <person name="Araujo R."/>
            <person name="Bowman C.L."/>
            <person name="Brooks S.Y."/>
            <person name="Buehler E."/>
            <person name="Chan A."/>
            <person name="Chao Q."/>
            <person name="Chen H."/>
            <person name="Cheuk R.F."/>
            <person name="Chin C.W."/>
            <person name="Chung M.K."/>
            <person name="Conn L."/>
            <person name="Conway A.B."/>
            <person name="Conway A.R."/>
            <person name="Creasy T.H."/>
            <person name="Dewar K."/>
            <person name="Dunn P."/>
            <person name="Etgu P."/>
            <person name="Feldblyum T.V."/>
            <person name="Feng J.-D."/>
            <person name="Fong B."/>
            <person name="Fujii C.Y."/>
            <person name="Gill J.E."/>
            <person name="Goldsmith A.D."/>
            <person name="Haas B."/>
            <person name="Hansen N.F."/>
            <person name="Hughes B."/>
            <person name="Huizar L."/>
            <person name="Hunter J.L."/>
            <person name="Jenkins J."/>
            <person name="Johnson-Hopson C."/>
            <person name="Khan S."/>
            <person name="Khaykin E."/>
            <person name="Kim C.J."/>
            <person name="Koo H.L."/>
            <person name="Kremenetskaia I."/>
            <person name="Kurtz D.B."/>
            <person name="Kwan A."/>
            <person name="Lam B."/>
            <person name="Langin-Hooper S."/>
            <person name="Lee A."/>
            <person name="Lee J.M."/>
            <person name="Lenz C.A."/>
            <person name="Li J.H."/>
            <person name="Li Y.-P."/>
            <person name="Lin X."/>
            <person name="Liu S.X."/>
            <person name="Liu Z.A."/>
            <person name="Luros J.S."/>
            <person name="Maiti R."/>
            <person name="Marziali A."/>
            <person name="Militscher J."/>
            <person name="Miranda M."/>
            <person name="Nguyen M."/>
            <person name="Nierman W.C."/>
            <person name="Osborne B.I."/>
            <person name="Pai G."/>
            <person name="Peterson J."/>
            <person name="Pham P.K."/>
            <person name="Rizzo M."/>
            <person name="Rooney T."/>
            <person name="Rowley D."/>
            <person name="Sakano H."/>
            <person name="Salzberg S.L."/>
            <person name="Schwartz J.R."/>
            <person name="Shinn P."/>
            <person name="Southwick A.M."/>
            <person name="Sun H."/>
            <person name="Tallon L.J."/>
            <person name="Tambunga G."/>
            <person name="Toriumi M.J."/>
            <person name="Town C.D."/>
            <person name="Utterback T."/>
            <person name="Van Aken S."/>
            <person name="Vaysberg M."/>
            <person name="Vysotskaia V.S."/>
            <person name="Walker M."/>
            <person name="Wu D."/>
            <person name="Yu G."/>
            <person name="Fraser C.M."/>
            <person name="Venter J.C."/>
            <person name="Davis R.W."/>
        </authorList>
    </citation>
    <scope>NUCLEOTIDE SEQUENCE [LARGE SCALE GENOMIC DNA]</scope>
    <source>
        <strain>cv. Columbia</strain>
    </source>
</reference>
<reference key="3">
    <citation type="journal article" date="2017" name="Plant J.">
        <title>Araport11: a complete reannotation of the Arabidopsis thaliana reference genome.</title>
        <authorList>
            <person name="Cheng C.Y."/>
            <person name="Krishnakumar V."/>
            <person name="Chan A.P."/>
            <person name="Thibaud-Nissen F."/>
            <person name="Schobel S."/>
            <person name="Town C.D."/>
        </authorList>
    </citation>
    <scope>GENOME REANNOTATION</scope>
    <source>
        <strain>cv. Columbia</strain>
    </source>
</reference>
<reference key="4">
    <citation type="journal article" date="2004" name="Gene">
        <title>AtPARN is an essential poly(A) ribonuclease in Arabidopsis.</title>
        <authorList>
            <person name="Chiba Y."/>
            <person name="Johnson M.A."/>
            <person name="Lidder P."/>
            <person name="Vogel J.T."/>
            <person name="van Erp H."/>
            <person name="Green P.J."/>
        </authorList>
    </citation>
    <scope>FUNCTION</scope>
    <scope>SUBCELLULAR LOCATION</scope>
    <scope>TISSUE SPECIFICITY</scope>
</reference>
<reference key="5">
    <citation type="journal article" date="2004" name="RNA">
        <title>mRNA deadenylation by PARN is essential for embryogenesis in higher plants.</title>
        <authorList>
            <person name="Reverdatto S.V."/>
            <person name="Dutko J.A."/>
            <person name="Chekanova J.A."/>
            <person name="Hamilton D.A."/>
            <person name="Belostotsky D.A."/>
        </authorList>
    </citation>
    <scope>FUNCTION</scope>
    <scope>SUBCELLULAR LOCATION</scope>
    <scope>TISSUE SPECIFICITY</scope>
    <scope>MUTAGENESIS OF 66-ASP--GLU-68</scope>
</reference>
<feature type="chain" id="PRO_0000212856" description="Poly(A)-specific ribonuclease PARN">
    <location>
        <begin position="1"/>
        <end position="689"/>
    </location>
</feature>
<feature type="binding site" evidence="6">
    <location>
        <position position="66"/>
    </location>
    <ligand>
        <name>a divalent metal cation</name>
        <dbReference type="ChEBI" id="CHEBI:60240"/>
    </ligand>
</feature>
<feature type="binding site" evidence="6">
    <location>
        <position position="68"/>
    </location>
    <ligand>
        <name>a divalent metal cation</name>
        <dbReference type="ChEBI" id="CHEBI:60240"/>
    </ligand>
</feature>
<feature type="binding site" evidence="1">
    <location>
        <position position="354"/>
    </location>
    <ligand>
        <name>a divalent metal cation</name>
        <dbReference type="ChEBI" id="CHEBI:60240"/>
    </ligand>
</feature>
<feature type="binding site" evidence="1">
    <location>
        <position position="459"/>
    </location>
    <ligand>
        <name>a divalent metal cation</name>
        <dbReference type="ChEBI" id="CHEBI:60240"/>
    </ligand>
</feature>
<feature type="splice variant" id="VSP_037055" description="In isoform 3." evidence="5">
    <location>
        <begin position="1"/>
        <end position="184"/>
    </location>
</feature>
<feature type="splice variant" id="VSP_037056" description="In isoform 2." evidence="5">
    <location>
        <begin position="1"/>
        <end position="149"/>
    </location>
</feature>
<feature type="mutagenesis site" description="Loss of function." evidence="3">
    <original>DLE</original>
    <variation>ALA</variation>
    <location>
        <begin position="66"/>
        <end position="68"/>
    </location>
</feature>
<comment type="function">
    <text evidence="2 3 4">3'-exoribonuclease that has a preference for poly(A) tails of mRNAs, thereby efficiently degrading poly(A) tails. Exonucleolytic degradation of the poly(A) tail is often the first step in the decay of eukaryotic mRNAs. Essential for early development, possibly by participating in silencing certain maternal mRNAs translationally. May have a pivotal role in stress response.</text>
</comment>
<comment type="catalytic activity">
    <reaction>
        <text>Exonucleolytic cleavage of poly(A) to 5'-AMP.</text>
        <dbReference type="EC" id="3.1.13.4"/>
    </reaction>
</comment>
<comment type="cofactor">
    <cofactor evidence="1">
        <name>a divalent metal cation</name>
        <dbReference type="ChEBI" id="CHEBI:60240"/>
    </cofactor>
</comment>
<comment type="subcellular location">
    <subcellularLocation>
        <location evidence="2">Nucleus</location>
    </subcellularLocation>
    <subcellularLocation>
        <location evidence="2 3">Cytoplasm</location>
    </subcellularLocation>
    <text evidence="3">Only cytoplasmic.</text>
</comment>
<comment type="alternative products">
    <event type="alternative splicing"/>
    <isoform>
        <id>Q9LG26-1</id>
        <name>1</name>
        <sequence type="displayed"/>
    </isoform>
    <isoform>
        <id>Q9LG26-2</id>
        <name>2</name>
        <sequence type="described" ref="VSP_037056"/>
    </isoform>
    <isoform>
        <id>Q9LG26-3</id>
        <name>3</name>
        <sequence type="described" ref="VSP_037055"/>
    </isoform>
</comment>
<comment type="tissue specificity">
    <text evidence="2 3">Widely expressed. Expressed in roots, stems, leaves and flowers.</text>
</comment>
<comment type="miscellaneous">
    <molecule>Isoform 2</molecule>
    <text evidence="6">May be due to a competing acceptor splice site.</text>
</comment>
<comment type="miscellaneous">
    <molecule>Isoform 3</molecule>
    <text evidence="6">May be due to intron retention.</text>
</comment>
<comment type="similarity">
    <text evidence="6">Belongs to the CAF1 family.</text>
</comment>
<comment type="sequence caution" evidence="6">
    <conflict type="erroneous gene model prediction">
        <sequence resource="EMBL-CDS" id="AAF79314"/>
    </conflict>
</comment>
<comment type="sequence caution" evidence="6">
    <conflict type="erroneous translation">
        <sequence resource="EMBL-CDS" id="BAE47488"/>
    </conflict>
    <text>Wrong choice of frame.</text>
</comment>
<sequence>MRRHKRWPLRSLVCSFSSSAAETVTTSTAASATAAFPLKHVTRSNFETTLNDLRSLVKAADFVAIDLEMTGVTSAPWRDSLEFDRYDVRYLKVKDSAEKFAVVQFGVCPFRWDSRTQSFVSYPHNFFVFPRQELTFDPPAHEFLCQTTSMDFLAKYQFDFNTCIHEGISYLSRREEEEASKRLKMLHGEDGIDSSGETEELKLVRLADVLFAARMEKLLNEWRSGLLHGGNASSEFPRISNGSNQSMETVFHHMRPALSLKGFTSHQLRVLNSVLRKHFGDLVYIHSNDKSSSSRDIVVYTDSDSDKENLMKEAKDERKRLAERKIQSAIGFRQVIDLLASEKKLIVGHNCFLDIAHVYSKFVGPLPSTAEKFVASINSHFPYIVDTKILLNVNPMLHQRMKKSSTSLSSAFSSLCPQIEFSSRSSDSFLQQRVNIDVEIDNVRCSNWNAGGKHEAGYDAFMTGCIFAQACNHLGFDFKQHSQLDDFAQNEKLEKYINRLYLSWTRGDIIDLRTGHSNADNWRVSKFKYENIVLIWNFPRKLKARGIKECICKAFGSASVTSVYHVDDSAVFVLFKNSELVWDFLALKRQLESSDGPVSVLHPLSKILEGGNTGAADYEAYKEICSSHVSEVMFSDQAETVGVKSRTRPNAQCETETREENTVTVTHKASDLIDAFLANRVEVETATSN</sequence>
<dbReference type="EC" id="3.1.13.4"/>
<dbReference type="EMBL" id="AB194966">
    <property type="protein sequence ID" value="BAD98514.1"/>
    <property type="molecule type" value="mRNA"/>
</dbReference>
<dbReference type="EMBL" id="AB223028">
    <property type="protein sequence ID" value="BAE47489.1"/>
    <property type="molecule type" value="mRNA"/>
</dbReference>
<dbReference type="EMBL" id="AB223029">
    <property type="protein sequence ID" value="BAE47490.1"/>
    <property type="molecule type" value="mRNA"/>
</dbReference>
<dbReference type="EMBL" id="AB223027">
    <property type="protein sequence ID" value="BAE47488.1"/>
    <property type="status" value="ALT_SEQ"/>
    <property type="molecule type" value="mRNA"/>
</dbReference>
<dbReference type="EMBL" id="AC002304">
    <property type="protein sequence ID" value="AAF79314.1"/>
    <property type="status" value="ALT_SEQ"/>
    <property type="molecule type" value="Genomic_DNA"/>
</dbReference>
<dbReference type="EMBL" id="CP002684">
    <property type="protein sequence ID" value="AEE33311.1"/>
    <property type="molecule type" value="Genomic_DNA"/>
</dbReference>
<dbReference type="EMBL" id="CP002684">
    <property type="protein sequence ID" value="ANM60396.1"/>
    <property type="molecule type" value="Genomic_DNA"/>
</dbReference>
<dbReference type="RefSeq" id="NP_001322686.1">
    <molecule id="Q9LG26-3"/>
    <property type="nucleotide sequence ID" value="NM_001333742.1"/>
</dbReference>
<dbReference type="RefSeq" id="NP_175983.5">
    <molecule id="Q9LG26-1"/>
    <property type="nucleotide sequence ID" value="NM_104464.7"/>
</dbReference>
<dbReference type="SMR" id="Q9LG26"/>
<dbReference type="FunCoup" id="Q9LG26">
    <property type="interactions" value="3250"/>
</dbReference>
<dbReference type="STRING" id="3702.Q9LG26"/>
<dbReference type="PaxDb" id="3702-AT1G55870.1"/>
<dbReference type="ProteomicsDB" id="236707">
    <molecule id="Q9LG26-1"/>
</dbReference>
<dbReference type="EnsemblPlants" id="AT1G55870.1">
    <molecule id="Q9LG26-1"/>
    <property type="protein sequence ID" value="AT1G55870.1"/>
    <property type="gene ID" value="AT1G55870"/>
</dbReference>
<dbReference type="EnsemblPlants" id="AT1G55870.4">
    <molecule id="Q9LG26-3"/>
    <property type="protein sequence ID" value="AT1G55870.4"/>
    <property type="gene ID" value="AT1G55870"/>
</dbReference>
<dbReference type="GeneID" id="842037"/>
<dbReference type="Gramene" id="AT1G55870.1">
    <molecule id="Q9LG26-1"/>
    <property type="protein sequence ID" value="AT1G55870.1"/>
    <property type="gene ID" value="AT1G55870"/>
</dbReference>
<dbReference type="Gramene" id="AT1G55870.4">
    <molecule id="Q9LG26-3"/>
    <property type="protein sequence ID" value="AT1G55870.4"/>
    <property type="gene ID" value="AT1G55870"/>
</dbReference>
<dbReference type="KEGG" id="ath:AT1G55870"/>
<dbReference type="Araport" id="AT1G55870"/>
<dbReference type="TAIR" id="AT1G55870">
    <property type="gene designation" value="AHG2"/>
</dbReference>
<dbReference type="eggNOG" id="KOG1990">
    <property type="taxonomic scope" value="Eukaryota"/>
</dbReference>
<dbReference type="HOGENOM" id="CLU_020384_1_0_1"/>
<dbReference type="InParanoid" id="Q9LG26"/>
<dbReference type="OMA" id="DHFPYIV"/>
<dbReference type="PhylomeDB" id="Q9LG26"/>
<dbReference type="BRENDA" id="3.1.13.4">
    <property type="organism ID" value="399"/>
</dbReference>
<dbReference type="PRO" id="PR:Q9LG26"/>
<dbReference type="Proteomes" id="UP000006548">
    <property type="component" value="Chromosome 1"/>
</dbReference>
<dbReference type="ExpressionAtlas" id="Q9LG26">
    <property type="expression patterns" value="baseline and differential"/>
</dbReference>
<dbReference type="GO" id="GO:0005739">
    <property type="term" value="C:mitochondrion"/>
    <property type="evidence" value="ECO:0000314"/>
    <property type="project" value="TAIR"/>
</dbReference>
<dbReference type="GO" id="GO:0005634">
    <property type="term" value="C:nucleus"/>
    <property type="evidence" value="ECO:0007669"/>
    <property type="project" value="UniProtKB-SubCell"/>
</dbReference>
<dbReference type="GO" id="GO:0043169">
    <property type="term" value="F:cation binding"/>
    <property type="evidence" value="ECO:0000250"/>
    <property type="project" value="UniProtKB"/>
</dbReference>
<dbReference type="GO" id="GO:0046872">
    <property type="term" value="F:metal ion binding"/>
    <property type="evidence" value="ECO:0007669"/>
    <property type="project" value="UniProtKB-KW"/>
</dbReference>
<dbReference type="GO" id="GO:0004535">
    <property type="term" value="F:poly(A)-specific ribonuclease activity"/>
    <property type="evidence" value="ECO:0007669"/>
    <property type="project" value="UniProtKB-EC"/>
</dbReference>
<dbReference type="GO" id="GO:0003723">
    <property type="term" value="F:RNA binding"/>
    <property type="evidence" value="ECO:0007669"/>
    <property type="project" value="UniProtKB-KW"/>
</dbReference>
<dbReference type="GO" id="GO:0006952">
    <property type="term" value="P:defense response"/>
    <property type="evidence" value="ECO:0007669"/>
    <property type="project" value="UniProtKB-KW"/>
</dbReference>
<dbReference type="GO" id="GO:0006397">
    <property type="term" value="P:mRNA processing"/>
    <property type="evidence" value="ECO:0007669"/>
    <property type="project" value="UniProtKB-KW"/>
</dbReference>
<dbReference type="GO" id="GO:0009737">
    <property type="term" value="P:response to abscisic acid"/>
    <property type="evidence" value="ECO:0000315"/>
    <property type="project" value="TAIR"/>
</dbReference>
<dbReference type="GO" id="GO:0006970">
    <property type="term" value="P:response to osmotic stress"/>
    <property type="evidence" value="ECO:0000315"/>
    <property type="project" value="TAIR"/>
</dbReference>
<dbReference type="GO" id="GO:0009751">
    <property type="term" value="P:response to salicylic acid"/>
    <property type="evidence" value="ECO:0000315"/>
    <property type="project" value="TAIR"/>
</dbReference>
<dbReference type="GO" id="GO:0009651">
    <property type="term" value="P:response to salt stress"/>
    <property type="evidence" value="ECO:0000315"/>
    <property type="project" value="TAIR"/>
</dbReference>
<dbReference type="FunFam" id="3.30.420.10:FF:000302">
    <property type="entry name" value="Poly(A)-specific ribonuclease PARN"/>
    <property type="match status" value="1"/>
</dbReference>
<dbReference type="Gene3D" id="3.30.420.10">
    <property type="entry name" value="Ribonuclease H-like superfamily/Ribonuclease H"/>
    <property type="match status" value="2"/>
</dbReference>
<dbReference type="InterPro" id="IPR051181">
    <property type="entry name" value="CAF1_poly(A)_ribonucleases"/>
</dbReference>
<dbReference type="InterPro" id="IPR006941">
    <property type="entry name" value="RNase_CAF1"/>
</dbReference>
<dbReference type="InterPro" id="IPR012337">
    <property type="entry name" value="RNaseH-like_sf"/>
</dbReference>
<dbReference type="InterPro" id="IPR036397">
    <property type="entry name" value="RNaseH_sf"/>
</dbReference>
<dbReference type="PANTHER" id="PTHR15092">
    <property type="entry name" value="POLY A -SPECIFIC RIBONUCLEASE/TARGET OF EGR1, MEMBER 1"/>
    <property type="match status" value="1"/>
</dbReference>
<dbReference type="PANTHER" id="PTHR15092:SF22">
    <property type="entry name" value="POLY(A)-SPECIFIC RIBONUCLEASE PNLDC1"/>
    <property type="match status" value="1"/>
</dbReference>
<dbReference type="Pfam" id="PF04857">
    <property type="entry name" value="CAF1"/>
    <property type="match status" value="1"/>
</dbReference>
<dbReference type="SUPFAM" id="SSF53098">
    <property type="entry name" value="Ribonuclease H-like"/>
    <property type="match status" value="1"/>
</dbReference>
<gene>
    <name type="primary">PARN</name>
    <name type="synonym">AHG2</name>
    <name type="ordered locus">At1g55870</name>
    <name type="ORF">F14J16.11</name>
</gene>
<name>PARN_ARATH</name>
<accession>Q9LG26</accession>
<accession>Q33CQ7</accession>
<accession>Q33CQ8</accession>
<accession>Q33CQ9</accession>
<accession>Q4W7J2</accession>
<evidence type="ECO:0000250" key="1">
    <source>
        <dbReference type="UniProtKB" id="O95453"/>
    </source>
</evidence>
<evidence type="ECO:0000269" key="2">
    <source>
    </source>
</evidence>
<evidence type="ECO:0000269" key="3">
    <source>
    </source>
</evidence>
<evidence type="ECO:0000269" key="4">
    <source>
    </source>
</evidence>
<evidence type="ECO:0000303" key="5">
    <source>
    </source>
</evidence>
<evidence type="ECO:0000305" key="6"/>
<organism>
    <name type="scientific">Arabidopsis thaliana</name>
    <name type="common">Mouse-ear cress</name>
    <dbReference type="NCBI Taxonomy" id="3702"/>
    <lineage>
        <taxon>Eukaryota</taxon>
        <taxon>Viridiplantae</taxon>
        <taxon>Streptophyta</taxon>
        <taxon>Embryophyta</taxon>
        <taxon>Tracheophyta</taxon>
        <taxon>Spermatophyta</taxon>
        <taxon>Magnoliopsida</taxon>
        <taxon>eudicotyledons</taxon>
        <taxon>Gunneridae</taxon>
        <taxon>Pentapetalae</taxon>
        <taxon>rosids</taxon>
        <taxon>malvids</taxon>
        <taxon>Brassicales</taxon>
        <taxon>Brassicaceae</taxon>
        <taxon>Camelineae</taxon>
        <taxon>Arabidopsis</taxon>
    </lineage>
</organism>